<proteinExistence type="inferred from homology"/>
<accession>A8EUF3</accession>
<organism>
    <name type="scientific">Aliarcobacter butzleri (strain RM4018)</name>
    <name type="common">Arcobacter butzleri</name>
    <dbReference type="NCBI Taxonomy" id="367737"/>
    <lineage>
        <taxon>Bacteria</taxon>
        <taxon>Pseudomonadati</taxon>
        <taxon>Campylobacterota</taxon>
        <taxon>Epsilonproteobacteria</taxon>
        <taxon>Campylobacterales</taxon>
        <taxon>Arcobacteraceae</taxon>
        <taxon>Aliarcobacter</taxon>
    </lineage>
</organism>
<name>RSMH_ALIB4</name>
<keyword id="KW-0963">Cytoplasm</keyword>
<keyword id="KW-0489">Methyltransferase</keyword>
<keyword id="KW-1185">Reference proteome</keyword>
<keyword id="KW-0698">rRNA processing</keyword>
<keyword id="KW-0949">S-adenosyl-L-methionine</keyword>
<keyword id="KW-0808">Transferase</keyword>
<evidence type="ECO:0000255" key="1">
    <source>
        <dbReference type="HAMAP-Rule" id="MF_01007"/>
    </source>
</evidence>
<feature type="chain" id="PRO_0000318869" description="Ribosomal RNA small subunit methyltransferase H">
    <location>
        <begin position="1"/>
        <end position="300"/>
    </location>
</feature>
<feature type="binding site" evidence="1">
    <location>
        <begin position="33"/>
        <end position="35"/>
    </location>
    <ligand>
        <name>S-adenosyl-L-methionine</name>
        <dbReference type="ChEBI" id="CHEBI:59789"/>
    </ligand>
</feature>
<feature type="binding site" evidence="1">
    <location>
        <position position="52"/>
    </location>
    <ligand>
        <name>S-adenosyl-L-methionine</name>
        <dbReference type="ChEBI" id="CHEBI:59789"/>
    </ligand>
</feature>
<feature type="binding site" evidence="1">
    <location>
        <position position="86"/>
    </location>
    <ligand>
        <name>S-adenosyl-L-methionine</name>
        <dbReference type="ChEBI" id="CHEBI:59789"/>
    </ligand>
</feature>
<feature type="binding site" evidence="1">
    <location>
        <position position="97"/>
    </location>
    <ligand>
        <name>S-adenosyl-L-methionine</name>
        <dbReference type="ChEBI" id="CHEBI:59789"/>
    </ligand>
</feature>
<feature type="binding site" evidence="1">
    <location>
        <position position="104"/>
    </location>
    <ligand>
        <name>S-adenosyl-L-methionine</name>
        <dbReference type="ChEBI" id="CHEBI:59789"/>
    </ligand>
</feature>
<sequence length="300" mass="34283">MDIPHIPVLYNEVLETFKDINEGYIIDCTTGFAGHSSGLLNQNQNIKLICNDQDDEALAFSKKRLEKFENGVIFNKGNFEHVIETFKDYEIRGVLADIGVSSLQLDKLERGFGFESLTLDMRMNQNQSLDAATVVNTYSQTELERIFKDYGEVREYKKVASLIVNNRPFNSSKELADFLSKKMSKGKLHPATLPFQAIRIEVNDELGVLERLFDSLEKAKLKDCIVAIISFHSLEDRIVKNYFKKWSKSCICPDNVFRCECGNNHALGKIITKKPIIPTALEIKQNPRSRSSKLRVFKFD</sequence>
<reference key="1">
    <citation type="journal article" date="2007" name="PLoS ONE">
        <title>The complete genome sequence and analysis of the Epsilonproteobacterium Arcobacter butzleri.</title>
        <authorList>
            <person name="Miller W.G."/>
            <person name="Parker C.T."/>
            <person name="Rubenfield M."/>
            <person name="Mendz G.L."/>
            <person name="Woesten M.M.S.M."/>
            <person name="Ussery D.W."/>
            <person name="Stolz J.F."/>
            <person name="Binnewies T.T."/>
            <person name="Hallin P.F."/>
            <person name="Wang G."/>
            <person name="Malek J.A."/>
            <person name="Rogosin A."/>
            <person name="Stanker L.H."/>
            <person name="Mandrell R.E."/>
        </authorList>
    </citation>
    <scope>NUCLEOTIDE SEQUENCE [LARGE SCALE GENOMIC DNA]</scope>
    <source>
        <strain>RM4018</strain>
    </source>
</reference>
<gene>
    <name evidence="1" type="primary">rsmH</name>
    <name type="synonym">mraW</name>
    <name type="ordered locus">Abu_1320</name>
</gene>
<comment type="function">
    <text evidence="1">Specifically methylates the N4 position of cytidine in position 1402 (C1402) of 16S rRNA.</text>
</comment>
<comment type="catalytic activity">
    <reaction evidence="1">
        <text>cytidine(1402) in 16S rRNA + S-adenosyl-L-methionine = N(4)-methylcytidine(1402) in 16S rRNA + S-adenosyl-L-homocysteine + H(+)</text>
        <dbReference type="Rhea" id="RHEA:42928"/>
        <dbReference type="Rhea" id="RHEA-COMP:10286"/>
        <dbReference type="Rhea" id="RHEA-COMP:10287"/>
        <dbReference type="ChEBI" id="CHEBI:15378"/>
        <dbReference type="ChEBI" id="CHEBI:57856"/>
        <dbReference type="ChEBI" id="CHEBI:59789"/>
        <dbReference type="ChEBI" id="CHEBI:74506"/>
        <dbReference type="ChEBI" id="CHEBI:82748"/>
        <dbReference type="EC" id="2.1.1.199"/>
    </reaction>
</comment>
<comment type="subcellular location">
    <subcellularLocation>
        <location evidence="1">Cytoplasm</location>
    </subcellularLocation>
</comment>
<comment type="similarity">
    <text evidence="1">Belongs to the methyltransferase superfamily. RsmH family.</text>
</comment>
<protein>
    <recommendedName>
        <fullName evidence="1">Ribosomal RNA small subunit methyltransferase H</fullName>
        <ecNumber evidence="1">2.1.1.199</ecNumber>
    </recommendedName>
    <alternativeName>
        <fullName evidence="1">16S rRNA m(4)C1402 methyltransferase</fullName>
    </alternativeName>
    <alternativeName>
        <fullName evidence="1">rRNA (cytosine-N(4)-)-methyltransferase RsmH</fullName>
    </alternativeName>
</protein>
<dbReference type="EC" id="2.1.1.199" evidence="1"/>
<dbReference type="EMBL" id="CP000361">
    <property type="protein sequence ID" value="ABV67577.1"/>
    <property type="molecule type" value="Genomic_DNA"/>
</dbReference>
<dbReference type="RefSeq" id="WP_012012986.1">
    <property type="nucleotide sequence ID" value="NC_009850.1"/>
</dbReference>
<dbReference type="SMR" id="A8EUF3"/>
<dbReference type="STRING" id="367737.Abu_1320"/>
<dbReference type="GeneID" id="24303887"/>
<dbReference type="KEGG" id="abu:Abu_1320"/>
<dbReference type="eggNOG" id="COG0275">
    <property type="taxonomic scope" value="Bacteria"/>
</dbReference>
<dbReference type="HOGENOM" id="CLU_038422_3_0_7"/>
<dbReference type="Proteomes" id="UP000001136">
    <property type="component" value="Chromosome"/>
</dbReference>
<dbReference type="GO" id="GO:0005737">
    <property type="term" value="C:cytoplasm"/>
    <property type="evidence" value="ECO:0007669"/>
    <property type="project" value="UniProtKB-SubCell"/>
</dbReference>
<dbReference type="GO" id="GO:0071424">
    <property type="term" value="F:rRNA (cytosine-N4-)-methyltransferase activity"/>
    <property type="evidence" value="ECO:0007669"/>
    <property type="project" value="UniProtKB-UniRule"/>
</dbReference>
<dbReference type="GO" id="GO:0070475">
    <property type="term" value="P:rRNA base methylation"/>
    <property type="evidence" value="ECO:0007669"/>
    <property type="project" value="UniProtKB-UniRule"/>
</dbReference>
<dbReference type="Gene3D" id="1.10.150.170">
    <property type="entry name" value="Putative methyltransferase TM0872, insert domain"/>
    <property type="match status" value="1"/>
</dbReference>
<dbReference type="Gene3D" id="3.40.50.150">
    <property type="entry name" value="Vaccinia Virus protein VP39"/>
    <property type="match status" value="1"/>
</dbReference>
<dbReference type="HAMAP" id="MF_01007">
    <property type="entry name" value="16SrRNA_methyltr_H"/>
    <property type="match status" value="1"/>
</dbReference>
<dbReference type="InterPro" id="IPR002903">
    <property type="entry name" value="RsmH"/>
</dbReference>
<dbReference type="InterPro" id="IPR023397">
    <property type="entry name" value="SAM-dep_MeTrfase_MraW_recog"/>
</dbReference>
<dbReference type="InterPro" id="IPR029063">
    <property type="entry name" value="SAM-dependent_MTases_sf"/>
</dbReference>
<dbReference type="NCBIfam" id="TIGR00006">
    <property type="entry name" value="16S rRNA (cytosine(1402)-N(4))-methyltransferase RsmH"/>
    <property type="match status" value="1"/>
</dbReference>
<dbReference type="PANTHER" id="PTHR11265:SF0">
    <property type="entry name" value="12S RRNA N4-METHYLCYTIDINE METHYLTRANSFERASE"/>
    <property type="match status" value="1"/>
</dbReference>
<dbReference type="PANTHER" id="PTHR11265">
    <property type="entry name" value="S-ADENOSYL-METHYLTRANSFERASE MRAW"/>
    <property type="match status" value="1"/>
</dbReference>
<dbReference type="Pfam" id="PF01795">
    <property type="entry name" value="Methyltransf_5"/>
    <property type="match status" value="1"/>
</dbReference>
<dbReference type="PIRSF" id="PIRSF004486">
    <property type="entry name" value="MraW"/>
    <property type="match status" value="1"/>
</dbReference>
<dbReference type="SUPFAM" id="SSF81799">
    <property type="entry name" value="Putative methyltransferase TM0872, insert domain"/>
    <property type="match status" value="1"/>
</dbReference>
<dbReference type="SUPFAM" id="SSF53335">
    <property type="entry name" value="S-adenosyl-L-methionine-dependent methyltransferases"/>
    <property type="match status" value="1"/>
</dbReference>